<name>PR38B_MOUSE</name>
<sequence length="542" mass="63753">MANNSPALTGNSQPQHQAAAAVTQQQQQCGGGGGATKPAVSGKQGNVLPLWGNEKTMNLNPMILTNILSSPYFKVQLYELKTYHEVVDEIYFKVTHVEPWEKGSRKTAGQTGMCGGVRGVGTGGIVSTAFCLLYKLFTLKLTRKQVMGLITHTDSPYIRALGFMYIRYTQPPTDLWDWFESFLDDEEDLDVKAGGGCVMTIGEMLRSFLTKLEWFSTLFPRIPVPVQKNIDQQIKTRPRKIKKDGKEGIEEIDRHVERRRSRSPRRSLSPRRSPRRSRSRSHHREGHGSSSFDRELEREKERQRLEREAKEREKERRRSRSIDRGLDRRRSRSRERHRSRSRSRDRKGDRRDRDREREKENERGRRRDRDYDKERGSDRERDRERSRERSKEQRSRGDGEEKKHKEDKEDRRHRDDKKESKKKHSRSRSRERKHRSRSRNAGKRSRSRSKDKSSRHKNESKEKANKRSRSGSQGRTGSVEKRKREHSPSREKSRKRSRSQDRSHKREHNDSKDQSDRQDHQSSQSGEPESQEKEHKSKDETV</sequence>
<dbReference type="EMBL" id="AK003895">
    <property type="protein sequence ID" value="BAB23062.1"/>
    <property type="molecule type" value="mRNA"/>
</dbReference>
<dbReference type="EMBL" id="AK015938">
    <property type="protein sequence ID" value="BAB30042.1"/>
    <property type="molecule type" value="mRNA"/>
</dbReference>
<dbReference type="EMBL" id="AK018126">
    <property type="protein sequence ID" value="BAB31082.1"/>
    <property type="molecule type" value="mRNA"/>
</dbReference>
<dbReference type="EMBL" id="AL671894">
    <property type="status" value="NOT_ANNOTATED_CDS"/>
    <property type="molecule type" value="Genomic_DNA"/>
</dbReference>
<dbReference type="EMBL" id="BC050900">
    <property type="protein sequence ID" value="AAH50900.1"/>
    <property type="molecule type" value="mRNA"/>
</dbReference>
<dbReference type="EMBL" id="BC052077">
    <property type="protein sequence ID" value="AAH52077.1"/>
    <property type="molecule type" value="mRNA"/>
</dbReference>
<dbReference type="CCDS" id="CCDS17770.1"/>
<dbReference type="RefSeq" id="NP_080121.1">
    <property type="nucleotide sequence ID" value="NM_025845.3"/>
</dbReference>
<dbReference type="SMR" id="Q80SY5"/>
<dbReference type="BioGRID" id="211810">
    <property type="interactions" value="1"/>
</dbReference>
<dbReference type="FunCoup" id="Q80SY5">
    <property type="interactions" value="181"/>
</dbReference>
<dbReference type="STRING" id="10090.ENSMUSP00000029480"/>
<dbReference type="iPTMnet" id="Q80SY5"/>
<dbReference type="PhosphoSitePlus" id="Q80SY5"/>
<dbReference type="jPOST" id="Q80SY5"/>
<dbReference type="PaxDb" id="10090-ENSMUSP00000029480"/>
<dbReference type="PeptideAtlas" id="Q80SY5"/>
<dbReference type="ProteomicsDB" id="291547"/>
<dbReference type="Pumba" id="Q80SY5"/>
<dbReference type="Antibodypedia" id="53741">
    <property type="antibodies" value="26 antibodies from 14 providers"/>
</dbReference>
<dbReference type="DNASU" id="66921"/>
<dbReference type="Ensembl" id="ENSMUST00000029480.9">
    <property type="protein sequence ID" value="ENSMUSP00000029480.9"/>
    <property type="gene ID" value="ENSMUSG00000027881.15"/>
</dbReference>
<dbReference type="GeneID" id="66921"/>
<dbReference type="KEGG" id="mmu:66921"/>
<dbReference type="UCSC" id="uc008qzx.1">
    <property type="organism name" value="mouse"/>
</dbReference>
<dbReference type="AGR" id="MGI:1914171"/>
<dbReference type="CTD" id="55119"/>
<dbReference type="MGI" id="MGI:1914171">
    <property type="gene designation" value="Prpf38b"/>
</dbReference>
<dbReference type="VEuPathDB" id="HostDB:ENSMUSG00000027881"/>
<dbReference type="eggNOG" id="KOG2888">
    <property type="taxonomic scope" value="Eukaryota"/>
</dbReference>
<dbReference type="GeneTree" id="ENSGT01130000278617"/>
<dbReference type="HOGENOM" id="CLU_034151_1_2_1"/>
<dbReference type="InParanoid" id="Q80SY5"/>
<dbReference type="OMA" id="ERSHKHD"/>
<dbReference type="OrthoDB" id="3881at2759"/>
<dbReference type="PhylomeDB" id="Q80SY5"/>
<dbReference type="TreeFam" id="TF313626"/>
<dbReference type="BioGRID-ORCS" id="66921">
    <property type="hits" value="22 hits in 76 CRISPR screens"/>
</dbReference>
<dbReference type="ChiTaRS" id="Prpf38b">
    <property type="organism name" value="mouse"/>
</dbReference>
<dbReference type="PRO" id="PR:Q80SY5"/>
<dbReference type="Proteomes" id="UP000000589">
    <property type="component" value="Chromosome 3"/>
</dbReference>
<dbReference type="RNAct" id="Q80SY5">
    <property type="molecule type" value="protein"/>
</dbReference>
<dbReference type="Bgee" id="ENSMUSG00000027881">
    <property type="expression patterns" value="Expressed in embryonic post-anal tail and 261 other cell types or tissues"/>
</dbReference>
<dbReference type="ExpressionAtlas" id="Q80SY5">
    <property type="expression patterns" value="baseline and differential"/>
</dbReference>
<dbReference type="GO" id="GO:0005681">
    <property type="term" value="C:spliceosomal complex"/>
    <property type="evidence" value="ECO:0007669"/>
    <property type="project" value="UniProtKB-KW"/>
</dbReference>
<dbReference type="GO" id="GO:0006397">
    <property type="term" value="P:mRNA processing"/>
    <property type="evidence" value="ECO:0007669"/>
    <property type="project" value="UniProtKB-KW"/>
</dbReference>
<dbReference type="GO" id="GO:0008380">
    <property type="term" value="P:RNA splicing"/>
    <property type="evidence" value="ECO:0007669"/>
    <property type="project" value="UniProtKB-KW"/>
</dbReference>
<dbReference type="InterPro" id="IPR005037">
    <property type="entry name" value="PRP38"/>
</dbReference>
<dbReference type="PANTHER" id="PTHR23142">
    <property type="entry name" value="PRE-MRNA-SPLICING FACTOR 38A-RELATED"/>
    <property type="match status" value="1"/>
</dbReference>
<dbReference type="Pfam" id="PF03371">
    <property type="entry name" value="PRP38"/>
    <property type="match status" value="1"/>
</dbReference>
<feature type="initiator methionine" description="Removed" evidence="6">
    <location>
        <position position="1"/>
    </location>
</feature>
<feature type="chain" id="PRO_0000287236" description="Pre-mRNA-splicing factor 38B">
    <location>
        <begin position="2"/>
        <end position="542"/>
    </location>
</feature>
<feature type="region of interest" description="Disordered" evidence="4">
    <location>
        <begin position="1"/>
        <end position="41"/>
    </location>
</feature>
<feature type="region of interest" description="Disordered" evidence="4">
    <location>
        <begin position="233"/>
        <end position="542"/>
    </location>
</feature>
<feature type="coiled-coil region" evidence="3">
    <location>
        <begin position="293"/>
        <end position="322"/>
    </location>
</feature>
<feature type="compositionally biased region" description="Polar residues" evidence="4">
    <location>
        <begin position="1"/>
        <end position="12"/>
    </location>
</feature>
<feature type="compositionally biased region" description="Low complexity" evidence="4">
    <location>
        <begin position="13"/>
        <end position="28"/>
    </location>
</feature>
<feature type="compositionally biased region" description="Basic and acidic residues" evidence="4">
    <location>
        <begin position="244"/>
        <end position="256"/>
    </location>
</feature>
<feature type="compositionally biased region" description="Basic residues" evidence="4">
    <location>
        <begin position="257"/>
        <end position="285"/>
    </location>
</feature>
<feature type="compositionally biased region" description="Basic and acidic residues" evidence="4">
    <location>
        <begin position="292"/>
        <end position="328"/>
    </location>
</feature>
<feature type="compositionally biased region" description="Basic residues" evidence="4">
    <location>
        <begin position="329"/>
        <end position="345"/>
    </location>
</feature>
<feature type="compositionally biased region" description="Basic and acidic residues" evidence="4">
    <location>
        <begin position="346"/>
        <end position="419"/>
    </location>
</feature>
<feature type="compositionally biased region" description="Basic residues" evidence="4">
    <location>
        <begin position="420"/>
        <end position="447"/>
    </location>
</feature>
<feature type="compositionally biased region" description="Basic and acidic residues" evidence="4">
    <location>
        <begin position="448"/>
        <end position="465"/>
    </location>
</feature>
<feature type="compositionally biased region" description="Basic and acidic residues" evidence="4">
    <location>
        <begin position="478"/>
        <end position="491"/>
    </location>
</feature>
<feature type="compositionally biased region" description="Basic and acidic residues" evidence="4">
    <location>
        <begin position="498"/>
        <end position="520"/>
    </location>
</feature>
<feature type="compositionally biased region" description="Basic and acidic residues" evidence="4">
    <location>
        <begin position="530"/>
        <end position="542"/>
    </location>
</feature>
<feature type="modified residue" description="N-acetylalanine" evidence="6">
    <location>
        <position position="2"/>
    </location>
</feature>
<feature type="modified residue" description="Phosphoserine" evidence="2">
    <location>
        <position position="5"/>
    </location>
</feature>
<feature type="modified residue" description="N6-acetyllysine" evidence="7">
    <location>
        <position position="228"/>
    </location>
</feature>
<feature type="modified residue" description="Phosphoserine" evidence="1">
    <location>
        <position position="289"/>
    </location>
</feature>
<feature type="modified residue" description="Phosphoserine" evidence="1">
    <location>
        <position position="291"/>
    </location>
</feature>
<feature type="modified residue" description="Phosphoserine" evidence="1">
    <location>
        <position position="319"/>
    </location>
</feature>
<feature type="modified residue" description="Phosphoserine" evidence="1">
    <location>
        <position position="321"/>
    </location>
</feature>
<feature type="modified residue" description="Phosphoserine" evidence="1">
    <location>
        <position position="445"/>
    </location>
</feature>
<feature type="modified residue" description="Phosphoserine" evidence="1">
    <location>
        <position position="470"/>
    </location>
</feature>
<feature type="modified residue" description="Phosphoserine" evidence="1">
    <location>
        <position position="472"/>
    </location>
</feature>
<feature type="modified residue" description="Phosphoserine" evidence="1">
    <location>
        <position position="478"/>
    </location>
</feature>
<feature type="modified residue" description="Phosphoserine" evidence="1">
    <location>
        <position position="523"/>
    </location>
</feature>
<feature type="modified residue" description="Phosphoserine" evidence="1">
    <location>
        <position position="525"/>
    </location>
</feature>
<feature type="modified residue" description="Phosphoserine" evidence="1">
    <location>
        <position position="530"/>
    </location>
</feature>
<feature type="sequence conflict" description="In Ref. 1; BAB23062." evidence="5" ref="1">
    <original>G</original>
    <variation>W</variation>
    <location>
        <position position="348"/>
    </location>
</feature>
<organism>
    <name type="scientific">Mus musculus</name>
    <name type="common">Mouse</name>
    <dbReference type="NCBI Taxonomy" id="10090"/>
    <lineage>
        <taxon>Eukaryota</taxon>
        <taxon>Metazoa</taxon>
        <taxon>Chordata</taxon>
        <taxon>Craniata</taxon>
        <taxon>Vertebrata</taxon>
        <taxon>Euteleostomi</taxon>
        <taxon>Mammalia</taxon>
        <taxon>Eutheria</taxon>
        <taxon>Euarchontoglires</taxon>
        <taxon>Glires</taxon>
        <taxon>Rodentia</taxon>
        <taxon>Myomorpha</taxon>
        <taxon>Muroidea</taxon>
        <taxon>Muridae</taxon>
        <taxon>Murinae</taxon>
        <taxon>Mus</taxon>
        <taxon>Mus</taxon>
    </lineage>
</organism>
<evidence type="ECO:0000250" key="1">
    <source>
        <dbReference type="UniProtKB" id="Q5VTL8"/>
    </source>
</evidence>
<evidence type="ECO:0000250" key="2">
    <source>
        <dbReference type="UniProtKB" id="Q6AXY7"/>
    </source>
</evidence>
<evidence type="ECO:0000255" key="3"/>
<evidence type="ECO:0000256" key="4">
    <source>
        <dbReference type="SAM" id="MobiDB-lite"/>
    </source>
</evidence>
<evidence type="ECO:0000305" key="5"/>
<evidence type="ECO:0007744" key="6">
    <source>
    </source>
</evidence>
<evidence type="ECO:0007744" key="7">
    <source>
    </source>
</evidence>
<comment type="function">
    <text evidence="5">May be required for pre-mRNA splicing.</text>
</comment>
<comment type="subcellular location">
    <subcellularLocation>
        <location evidence="5">Nucleus</location>
    </subcellularLocation>
</comment>
<comment type="similarity">
    <text evidence="5">Belongs to the PRP38 family.</text>
</comment>
<protein>
    <recommendedName>
        <fullName>Pre-mRNA-splicing factor 38B</fullName>
    </recommendedName>
</protein>
<gene>
    <name type="primary">Prpf38b</name>
</gene>
<accession>Q80SY5</accession>
<accession>Q9CTD9</accession>
<accession>Q9CU48</accession>
<accession>Q9CUI6</accession>
<keyword id="KW-0007">Acetylation</keyword>
<keyword id="KW-0175">Coiled coil</keyword>
<keyword id="KW-0507">mRNA processing</keyword>
<keyword id="KW-0508">mRNA splicing</keyword>
<keyword id="KW-0539">Nucleus</keyword>
<keyword id="KW-0597">Phosphoprotein</keyword>
<keyword id="KW-1185">Reference proteome</keyword>
<keyword id="KW-0747">Spliceosome</keyword>
<reference key="1">
    <citation type="journal article" date="2005" name="Science">
        <title>The transcriptional landscape of the mammalian genome.</title>
        <authorList>
            <person name="Carninci P."/>
            <person name="Kasukawa T."/>
            <person name="Katayama S."/>
            <person name="Gough J."/>
            <person name="Frith M.C."/>
            <person name="Maeda N."/>
            <person name="Oyama R."/>
            <person name="Ravasi T."/>
            <person name="Lenhard B."/>
            <person name="Wells C."/>
            <person name="Kodzius R."/>
            <person name="Shimokawa K."/>
            <person name="Bajic V.B."/>
            <person name="Brenner S.E."/>
            <person name="Batalov S."/>
            <person name="Forrest A.R."/>
            <person name="Zavolan M."/>
            <person name="Davis M.J."/>
            <person name="Wilming L.G."/>
            <person name="Aidinis V."/>
            <person name="Allen J.E."/>
            <person name="Ambesi-Impiombato A."/>
            <person name="Apweiler R."/>
            <person name="Aturaliya R.N."/>
            <person name="Bailey T.L."/>
            <person name="Bansal M."/>
            <person name="Baxter L."/>
            <person name="Beisel K.W."/>
            <person name="Bersano T."/>
            <person name="Bono H."/>
            <person name="Chalk A.M."/>
            <person name="Chiu K.P."/>
            <person name="Choudhary V."/>
            <person name="Christoffels A."/>
            <person name="Clutterbuck D.R."/>
            <person name="Crowe M.L."/>
            <person name="Dalla E."/>
            <person name="Dalrymple B.P."/>
            <person name="de Bono B."/>
            <person name="Della Gatta G."/>
            <person name="di Bernardo D."/>
            <person name="Down T."/>
            <person name="Engstrom P."/>
            <person name="Fagiolini M."/>
            <person name="Faulkner G."/>
            <person name="Fletcher C.F."/>
            <person name="Fukushima T."/>
            <person name="Furuno M."/>
            <person name="Futaki S."/>
            <person name="Gariboldi M."/>
            <person name="Georgii-Hemming P."/>
            <person name="Gingeras T.R."/>
            <person name="Gojobori T."/>
            <person name="Green R.E."/>
            <person name="Gustincich S."/>
            <person name="Harbers M."/>
            <person name="Hayashi Y."/>
            <person name="Hensch T.K."/>
            <person name="Hirokawa N."/>
            <person name="Hill D."/>
            <person name="Huminiecki L."/>
            <person name="Iacono M."/>
            <person name="Ikeo K."/>
            <person name="Iwama A."/>
            <person name="Ishikawa T."/>
            <person name="Jakt M."/>
            <person name="Kanapin A."/>
            <person name="Katoh M."/>
            <person name="Kawasawa Y."/>
            <person name="Kelso J."/>
            <person name="Kitamura H."/>
            <person name="Kitano H."/>
            <person name="Kollias G."/>
            <person name="Krishnan S.P."/>
            <person name="Kruger A."/>
            <person name="Kummerfeld S.K."/>
            <person name="Kurochkin I.V."/>
            <person name="Lareau L.F."/>
            <person name="Lazarevic D."/>
            <person name="Lipovich L."/>
            <person name="Liu J."/>
            <person name="Liuni S."/>
            <person name="McWilliam S."/>
            <person name="Madan Babu M."/>
            <person name="Madera M."/>
            <person name="Marchionni L."/>
            <person name="Matsuda H."/>
            <person name="Matsuzawa S."/>
            <person name="Miki H."/>
            <person name="Mignone F."/>
            <person name="Miyake S."/>
            <person name="Morris K."/>
            <person name="Mottagui-Tabar S."/>
            <person name="Mulder N."/>
            <person name="Nakano N."/>
            <person name="Nakauchi H."/>
            <person name="Ng P."/>
            <person name="Nilsson R."/>
            <person name="Nishiguchi S."/>
            <person name="Nishikawa S."/>
            <person name="Nori F."/>
            <person name="Ohara O."/>
            <person name="Okazaki Y."/>
            <person name="Orlando V."/>
            <person name="Pang K.C."/>
            <person name="Pavan W.J."/>
            <person name="Pavesi G."/>
            <person name="Pesole G."/>
            <person name="Petrovsky N."/>
            <person name="Piazza S."/>
            <person name="Reed J."/>
            <person name="Reid J.F."/>
            <person name="Ring B.Z."/>
            <person name="Ringwald M."/>
            <person name="Rost B."/>
            <person name="Ruan Y."/>
            <person name="Salzberg S.L."/>
            <person name="Sandelin A."/>
            <person name="Schneider C."/>
            <person name="Schoenbach C."/>
            <person name="Sekiguchi K."/>
            <person name="Semple C.A."/>
            <person name="Seno S."/>
            <person name="Sessa L."/>
            <person name="Sheng Y."/>
            <person name="Shibata Y."/>
            <person name="Shimada H."/>
            <person name="Shimada K."/>
            <person name="Silva D."/>
            <person name="Sinclair B."/>
            <person name="Sperling S."/>
            <person name="Stupka E."/>
            <person name="Sugiura K."/>
            <person name="Sultana R."/>
            <person name="Takenaka Y."/>
            <person name="Taki K."/>
            <person name="Tammoja K."/>
            <person name="Tan S.L."/>
            <person name="Tang S."/>
            <person name="Taylor M.S."/>
            <person name="Tegner J."/>
            <person name="Teichmann S.A."/>
            <person name="Ueda H.R."/>
            <person name="van Nimwegen E."/>
            <person name="Verardo R."/>
            <person name="Wei C.L."/>
            <person name="Yagi K."/>
            <person name="Yamanishi H."/>
            <person name="Zabarovsky E."/>
            <person name="Zhu S."/>
            <person name="Zimmer A."/>
            <person name="Hide W."/>
            <person name="Bult C."/>
            <person name="Grimmond S.M."/>
            <person name="Teasdale R.D."/>
            <person name="Liu E.T."/>
            <person name="Brusic V."/>
            <person name="Quackenbush J."/>
            <person name="Wahlestedt C."/>
            <person name="Mattick J.S."/>
            <person name="Hume D.A."/>
            <person name="Kai C."/>
            <person name="Sasaki D."/>
            <person name="Tomaru Y."/>
            <person name="Fukuda S."/>
            <person name="Kanamori-Katayama M."/>
            <person name="Suzuki M."/>
            <person name="Aoki J."/>
            <person name="Arakawa T."/>
            <person name="Iida J."/>
            <person name="Imamura K."/>
            <person name="Itoh M."/>
            <person name="Kato T."/>
            <person name="Kawaji H."/>
            <person name="Kawagashira N."/>
            <person name="Kawashima T."/>
            <person name="Kojima M."/>
            <person name="Kondo S."/>
            <person name="Konno H."/>
            <person name="Nakano K."/>
            <person name="Ninomiya N."/>
            <person name="Nishio T."/>
            <person name="Okada M."/>
            <person name="Plessy C."/>
            <person name="Shibata K."/>
            <person name="Shiraki T."/>
            <person name="Suzuki S."/>
            <person name="Tagami M."/>
            <person name="Waki K."/>
            <person name="Watahiki A."/>
            <person name="Okamura-Oho Y."/>
            <person name="Suzuki H."/>
            <person name="Kawai J."/>
            <person name="Hayashizaki Y."/>
        </authorList>
    </citation>
    <scope>NUCLEOTIDE SEQUENCE [LARGE SCALE MRNA]</scope>
    <source>
        <strain>C57BL/6J</strain>
        <tissue>Medulla oblongata</tissue>
        <tissue>Testis</tissue>
    </source>
</reference>
<reference key="2">
    <citation type="journal article" date="2009" name="PLoS Biol.">
        <title>Lineage-specific biology revealed by a finished genome assembly of the mouse.</title>
        <authorList>
            <person name="Church D.M."/>
            <person name="Goodstadt L."/>
            <person name="Hillier L.W."/>
            <person name="Zody M.C."/>
            <person name="Goldstein S."/>
            <person name="She X."/>
            <person name="Bult C.J."/>
            <person name="Agarwala R."/>
            <person name="Cherry J.L."/>
            <person name="DiCuccio M."/>
            <person name="Hlavina W."/>
            <person name="Kapustin Y."/>
            <person name="Meric P."/>
            <person name="Maglott D."/>
            <person name="Birtle Z."/>
            <person name="Marques A.C."/>
            <person name="Graves T."/>
            <person name="Zhou S."/>
            <person name="Teague B."/>
            <person name="Potamousis K."/>
            <person name="Churas C."/>
            <person name="Place M."/>
            <person name="Herschleb J."/>
            <person name="Runnheim R."/>
            <person name="Forrest D."/>
            <person name="Amos-Landgraf J."/>
            <person name="Schwartz D.C."/>
            <person name="Cheng Z."/>
            <person name="Lindblad-Toh K."/>
            <person name="Eichler E.E."/>
            <person name="Ponting C.P."/>
        </authorList>
    </citation>
    <scope>NUCLEOTIDE SEQUENCE [LARGE SCALE GENOMIC DNA]</scope>
    <source>
        <strain>C57BL/6J</strain>
    </source>
</reference>
<reference key="3">
    <citation type="journal article" date="2004" name="Genome Res.">
        <title>The status, quality, and expansion of the NIH full-length cDNA project: the Mammalian Gene Collection (MGC).</title>
        <authorList>
            <consortium name="The MGC Project Team"/>
        </authorList>
    </citation>
    <scope>NUCLEOTIDE SEQUENCE [LARGE SCALE MRNA]</scope>
    <source>
        <strain>C57BL/6J</strain>
    </source>
</reference>
<reference key="4">
    <citation type="journal article" date="2007" name="Proc. Natl. Acad. Sci. U.S.A.">
        <title>Large-scale phosphorylation analysis of mouse liver.</title>
        <authorList>
            <person name="Villen J."/>
            <person name="Beausoleil S.A."/>
            <person name="Gerber S.A."/>
            <person name="Gygi S.P."/>
        </authorList>
    </citation>
    <scope>ACETYLATION [LARGE SCALE ANALYSIS] AT ALA-2</scope>
    <scope>CLEAVAGE OF INITIATOR METHIONINE [LARGE SCALE ANALYSIS]</scope>
    <scope>IDENTIFICATION BY MASS SPECTROMETRY [LARGE SCALE ANALYSIS]</scope>
    <source>
        <tissue>Liver</tissue>
    </source>
</reference>
<reference key="5">
    <citation type="journal article" date="2013" name="Mol. Cell">
        <title>SIRT5-mediated lysine desuccinylation impacts diverse metabolic pathways.</title>
        <authorList>
            <person name="Park J."/>
            <person name="Chen Y."/>
            <person name="Tishkoff D.X."/>
            <person name="Peng C."/>
            <person name="Tan M."/>
            <person name="Dai L."/>
            <person name="Xie Z."/>
            <person name="Zhang Y."/>
            <person name="Zwaans B.M."/>
            <person name="Skinner M.E."/>
            <person name="Lombard D.B."/>
            <person name="Zhao Y."/>
        </authorList>
    </citation>
    <scope>ACETYLATION [LARGE SCALE ANALYSIS] AT LYS-228</scope>
    <scope>IDENTIFICATION BY MASS SPECTROMETRY [LARGE SCALE ANALYSIS]</scope>
    <source>
        <tissue>Embryonic fibroblast</tissue>
    </source>
</reference>
<proteinExistence type="evidence at protein level"/>